<sequence length="22" mass="2230">TQLEAACPNVVSCADILALAAR</sequence>
<reference evidence="6" key="1">
    <citation type="journal article" date="2009" name="J. Plant Physiol.">
        <title>Analysis of the soluble cell wall proteome of gymnosperms.</title>
        <authorList>
            <person name="Uzal E.N."/>
            <person name="Gomez-Ros L.V."/>
            <person name="Hernandez J.A."/>
            <person name="Pedreno M.A."/>
            <person name="Cuello J."/>
            <person name="Ros Barcelo A."/>
        </authorList>
    </citation>
    <scope>PROTEIN SEQUENCE</scope>
    <scope>SUBCELLULAR LOCATION</scope>
    <source>
        <tissue evidence="4">Callus</tissue>
    </source>
</reference>
<keyword id="KW-0106">Calcium</keyword>
<keyword id="KW-0134">Cell wall</keyword>
<keyword id="KW-0903">Direct protein sequencing</keyword>
<keyword id="KW-0349">Heme</keyword>
<keyword id="KW-0376">Hydrogen peroxide</keyword>
<keyword id="KW-0408">Iron</keyword>
<keyword id="KW-0479">Metal-binding</keyword>
<keyword id="KW-0560">Oxidoreductase</keyword>
<keyword id="KW-0575">Peroxidase</keyword>
<keyword id="KW-0964">Secreted</keyword>
<comment type="function">
    <text evidence="6">Removal of H(2)O(2), oxidation of toxic reductants, biosynthesis and degradation of lignin, suberization, auxin catabolism, response to environmental stresses such as wounding, pathogen attack and oxidative stress. These functions might be dependent on each isozyme/isoform in each plant tissue.</text>
</comment>
<comment type="catalytic activity">
    <reaction>
        <text>2 a phenolic donor + H2O2 = 2 a phenolic radical donor + 2 H2O</text>
        <dbReference type="Rhea" id="RHEA:56136"/>
        <dbReference type="ChEBI" id="CHEBI:15377"/>
        <dbReference type="ChEBI" id="CHEBI:16240"/>
        <dbReference type="ChEBI" id="CHEBI:139520"/>
        <dbReference type="ChEBI" id="CHEBI:139521"/>
        <dbReference type="EC" id="1.11.1.7"/>
    </reaction>
</comment>
<comment type="cofactor">
    <cofactor evidence="2 3">
        <name>heme b</name>
        <dbReference type="ChEBI" id="CHEBI:60344"/>
    </cofactor>
    <text evidence="2 3">Binds 1 heme b (iron(II)-protoporphyrin IX) group per subunit.</text>
</comment>
<comment type="cofactor">
    <cofactor evidence="2 3">
        <name>Ca(2+)</name>
        <dbReference type="ChEBI" id="CHEBI:29108"/>
    </cofactor>
    <text evidence="2 3">Binds 2 calcium ions per subunit.</text>
</comment>
<comment type="subcellular location">
    <subcellularLocation>
        <location evidence="1 3">Secreted</location>
    </subcellularLocation>
    <subcellularLocation>
        <location evidence="4">Secreted</location>
        <location evidence="4">Cell wall</location>
    </subcellularLocation>
</comment>
<comment type="similarity">
    <text evidence="3">Belongs to the peroxidase family. Classical plant (class III) peroxidase subfamily.</text>
</comment>
<organism>
    <name type="scientific">Cycas revoluta</name>
    <name type="common">Sago palm</name>
    <dbReference type="NCBI Taxonomy" id="3396"/>
    <lineage>
        <taxon>Eukaryota</taxon>
        <taxon>Viridiplantae</taxon>
        <taxon>Streptophyta</taxon>
        <taxon>Embryophyta</taxon>
        <taxon>Tracheophyta</taxon>
        <taxon>Spermatophyta</taxon>
        <taxon>Cycadidae</taxon>
        <taxon>Cycadales</taxon>
        <taxon>Cycadaceae</taxon>
        <taxon>Cycas</taxon>
    </lineage>
</organism>
<feature type="chain" id="PRO_0000320212" description="Peroxidase 5">
    <location>
        <begin position="1" status="less than"/>
        <end position="22" status="greater than"/>
    </location>
</feature>
<feature type="non-terminal residue" evidence="5">
    <location>
        <position position="1"/>
    </location>
</feature>
<feature type="non-terminal residue" evidence="5">
    <location>
        <position position="22"/>
    </location>
</feature>
<protein>
    <recommendedName>
        <fullName>Peroxidase 5</fullName>
        <ecNumber>1.11.1.7</ecNumber>
    </recommendedName>
</protein>
<evidence type="ECO:0000250" key="1">
    <source>
        <dbReference type="UniProtKB" id="P84516"/>
    </source>
</evidence>
<evidence type="ECO:0000250" key="2">
    <source>
        <dbReference type="UniProtKB" id="Q39034"/>
    </source>
</evidence>
<evidence type="ECO:0000255" key="3">
    <source>
        <dbReference type="PROSITE-ProRule" id="PRU00297"/>
    </source>
</evidence>
<evidence type="ECO:0000269" key="4">
    <source>
    </source>
</evidence>
<evidence type="ECO:0000303" key="5">
    <source>
    </source>
</evidence>
<evidence type="ECO:0000305" key="6"/>
<proteinExistence type="evidence at protein level"/>
<name>PER5_CYCRE</name>
<accession>P85431</accession>
<dbReference type="EC" id="1.11.1.7"/>
<dbReference type="GO" id="GO:0005576">
    <property type="term" value="C:extracellular region"/>
    <property type="evidence" value="ECO:0007669"/>
    <property type="project" value="UniProtKB-SubCell"/>
</dbReference>
<dbReference type="GO" id="GO:0020037">
    <property type="term" value="F:heme binding"/>
    <property type="evidence" value="ECO:0007669"/>
    <property type="project" value="InterPro"/>
</dbReference>
<dbReference type="GO" id="GO:0140825">
    <property type="term" value="F:lactoperoxidase activity"/>
    <property type="evidence" value="ECO:0007669"/>
    <property type="project" value="UniProtKB-EC"/>
</dbReference>
<dbReference type="GO" id="GO:0046872">
    <property type="term" value="F:metal ion binding"/>
    <property type="evidence" value="ECO:0007669"/>
    <property type="project" value="UniProtKB-KW"/>
</dbReference>
<dbReference type="GO" id="GO:0042744">
    <property type="term" value="P:hydrogen peroxide catabolic process"/>
    <property type="evidence" value="ECO:0007669"/>
    <property type="project" value="UniProtKB-KW"/>
</dbReference>
<dbReference type="GO" id="GO:0006979">
    <property type="term" value="P:response to oxidative stress"/>
    <property type="evidence" value="ECO:0007669"/>
    <property type="project" value="InterPro"/>
</dbReference>
<dbReference type="Gene3D" id="1.10.520.10">
    <property type="match status" value="1"/>
</dbReference>
<dbReference type="InterPro" id="IPR002016">
    <property type="entry name" value="Haem_peroxidase"/>
</dbReference>
<dbReference type="InterPro" id="IPR010255">
    <property type="entry name" value="Haem_peroxidase_sf"/>
</dbReference>
<dbReference type="Pfam" id="PF00141">
    <property type="entry name" value="peroxidase"/>
    <property type="match status" value="1"/>
</dbReference>
<dbReference type="SUPFAM" id="SSF48113">
    <property type="entry name" value="Heme-dependent peroxidases"/>
    <property type="match status" value="1"/>
</dbReference>
<dbReference type="PROSITE" id="PS50873">
    <property type="entry name" value="PEROXIDASE_4"/>
    <property type="match status" value="1"/>
</dbReference>